<gene>
    <name type="primary">EIF5A2</name>
</gene>
<organism>
    <name type="scientific">Gallus gallus</name>
    <name type="common">Chicken</name>
    <dbReference type="NCBI Taxonomy" id="9031"/>
    <lineage>
        <taxon>Eukaryota</taxon>
        <taxon>Metazoa</taxon>
        <taxon>Chordata</taxon>
        <taxon>Craniata</taxon>
        <taxon>Vertebrata</taxon>
        <taxon>Euteleostomi</taxon>
        <taxon>Archelosauria</taxon>
        <taxon>Archosauria</taxon>
        <taxon>Dinosauria</taxon>
        <taxon>Saurischia</taxon>
        <taxon>Theropoda</taxon>
        <taxon>Coelurosauria</taxon>
        <taxon>Aves</taxon>
        <taxon>Neognathae</taxon>
        <taxon>Galloanserae</taxon>
        <taxon>Galliformes</taxon>
        <taxon>Phasianidae</taxon>
        <taxon>Phasianinae</taxon>
        <taxon>Gallus</taxon>
    </lineage>
</organism>
<dbReference type="EMBL" id="M99499">
    <property type="protein sequence ID" value="AAA17444.1"/>
    <property type="molecule type" value="mRNA"/>
</dbReference>
<dbReference type="PIR" id="I50227">
    <property type="entry name" value="A42156"/>
</dbReference>
<dbReference type="RefSeq" id="NP_001383069.1">
    <property type="nucleotide sequence ID" value="NM_001396140.1"/>
</dbReference>
<dbReference type="RefSeq" id="NP_990863.1">
    <property type="nucleotide sequence ID" value="NM_205532.2"/>
</dbReference>
<dbReference type="RefSeq" id="XP_015147137.1">
    <property type="nucleotide sequence ID" value="XM_015291651.1"/>
</dbReference>
<dbReference type="SMR" id="Q07460"/>
<dbReference type="FunCoup" id="Q07460">
    <property type="interactions" value="1527"/>
</dbReference>
<dbReference type="STRING" id="9031.ENSGALP00000038570"/>
<dbReference type="PaxDb" id="9031-ENSGALP00000038570"/>
<dbReference type="Ensembl" id="ENSGALT00010033632.1">
    <property type="protein sequence ID" value="ENSGALP00010019805.1"/>
    <property type="gene ID" value="ENSGALG00010014010.1"/>
</dbReference>
<dbReference type="GeneID" id="396545"/>
<dbReference type="KEGG" id="gga:396545"/>
<dbReference type="CTD" id="56648"/>
<dbReference type="VEuPathDB" id="HostDB:geneid_396545"/>
<dbReference type="eggNOG" id="KOG3271">
    <property type="taxonomic scope" value="Eukaryota"/>
</dbReference>
<dbReference type="GeneTree" id="ENSGT00390000003738"/>
<dbReference type="HOGENOM" id="CLU_102600_0_0_1"/>
<dbReference type="InParanoid" id="Q07460"/>
<dbReference type="OMA" id="QIMDMET"/>
<dbReference type="OrthoDB" id="9975114at2759"/>
<dbReference type="PhylomeDB" id="Q07460"/>
<dbReference type="TreeFam" id="TF101534"/>
<dbReference type="Reactome" id="R-GGA-204626">
    <property type="pathway name" value="Hypusine synthesis from eIF5A-lysine"/>
</dbReference>
<dbReference type="PRO" id="PR:Q07460"/>
<dbReference type="Proteomes" id="UP000000539">
    <property type="component" value="Chromosome 9"/>
</dbReference>
<dbReference type="Bgee" id="ENSGALG00000009309">
    <property type="expression patterns" value="Expressed in spermatocyte and 14 other cell types or tissues"/>
</dbReference>
<dbReference type="GO" id="GO:0005789">
    <property type="term" value="C:endoplasmic reticulum membrane"/>
    <property type="evidence" value="ECO:0007669"/>
    <property type="project" value="UniProtKB-SubCell"/>
</dbReference>
<dbReference type="GO" id="GO:0005634">
    <property type="term" value="C:nucleus"/>
    <property type="evidence" value="ECO:0007669"/>
    <property type="project" value="UniProtKB-SubCell"/>
</dbReference>
<dbReference type="GO" id="GO:0043022">
    <property type="term" value="F:ribosome binding"/>
    <property type="evidence" value="ECO:0007669"/>
    <property type="project" value="InterPro"/>
</dbReference>
<dbReference type="GO" id="GO:0003723">
    <property type="term" value="F:RNA binding"/>
    <property type="evidence" value="ECO:0007669"/>
    <property type="project" value="UniProtKB-KW"/>
</dbReference>
<dbReference type="GO" id="GO:0003746">
    <property type="term" value="F:translation elongation factor activity"/>
    <property type="evidence" value="ECO:0000318"/>
    <property type="project" value="GO_Central"/>
</dbReference>
<dbReference type="GO" id="GO:0045901">
    <property type="term" value="P:positive regulation of translational elongation"/>
    <property type="evidence" value="ECO:0007669"/>
    <property type="project" value="InterPro"/>
</dbReference>
<dbReference type="GO" id="GO:0045905">
    <property type="term" value="P:positive regulation of translational termination"/>
    <property type="evidence" value="ECO:0007669"/>
    <property type="project" value="InterPro"/>
</dbReference>
<dbReference type="GO" id="GO:0006414">
    <property type="term" value="P:translational elongation"/>
    <property type="evidence" value="ECO:0000318"/>
    <property type="project" value="GO_Central"/>
</dbReference>
<dbReference type="CDD" id="cd04468">
    <property type="entry name" value="S1_eIF5A"/>
    <property type="match status" value="1"/>
</dbReference>
<dbReference type="FunFam" id="2.30.30.30:FF:000007">
    <property type="entry name" value="Eukaryotic translation initiation factor 5A"/>
    <property type="match status" value="1"/>
</dbReference>
<dbReference type="FunFam" id="2.40.50.140:FF:000034">
    <property type="entry name" value="Eukaryotic translation initiation factor 5A"/>
    <property type="match status" value="1"/>
</dbReference>
<dbReference type="Gene3D" id="2.30.30.30">
    <property type="match status" value="1"/>
</dbReference>
<dbReference type="Gene3D" id="2.40.50.140">
    <property type="entry name" value="Nucleic acid-binding proteins"/>
    <property type="match status" value="1"/>
</dbReference>
<dbReference type="InterPro" id="IPR001884">
    <property type="entry name" value="IF5A-like"/>
</dbReference>
<dbReference type="InterPro" id="IPR048670">
    <property type="entry name" value="IF5A-like_N"/>
</dbReference>
<dbReference type="InterPro" id="IPR012340">
    <property type="entry name" value="NA-bd_OB-fold"/>
</dbReference>
<dbReference type="InterPro" id="IPR014722">
    <property type="entry name" value="Rib_uL2_dom2"/>
</dbReference>
<dbReference type="InterPro" id="IPR019769">
    <property type="entry name" value="Trans_elong_IF5A_hypusine_site"/>
</dbReference>
<dbReference type="InterPro" id="IPR020189">
    <property type="entry name" value="Transl_elong_IF5A_C"/>
</dbReference>
<dbReference type="InterPro" id="IPR008991">
    <property type="entry name" value="Translation_prot_SH3-like_sf"/>
</dbReference>
<dbReference type="NCBIfam" id="TIGR00037">
    <property type="entry name" value="eIF_5A"/>
    <property type="match status" value="1"/>
</dbReference>
<dbReference type="PANTHER" id="PTHR11673">
    <property type="entry name" value="TRANSLATION INITIATION FACTOR 5A FAMILY MEMBER"/>
    <property type="match status" value="1"/>
</dbReference>
<dbReference type="Pfam" id="PF01287">
    <property type="entry name" value="eIF-5a"/>
    <property type="match status" value="1"/>
</dbReference>
<dbReference type="Pfam" id="PF21485">
    <property type="entry name" value="IF5A-like_N"/>
    <property type="match status" value="1"/>
</dbReference>
<dbReference type="PIRSF" id="PIRSF003025">
    <property type="entry name" value="eIF5A"/>
    <property type="match status" value="1"/>
</dbReference>
<dbReference type="SMART" id="SM01376">
    <property type="entry name" value="eIF-5a"/>
    <property type="match status" value="1"/>
</dbReference>
<dbReference type="SUPFAM" id="SSF50249">
    <property type="entry name" value="Nucleic acid-binding proteins"/>
    <property type="match status" value="1"/>
</dbReference>
<dbReference type="SUPFAM" id="SSF50104">
    <property type="entry name" value="Translation proteins SH3-like domain"/>
    <property type="match status" value="1"/>
</dbReference>
<dbReference type="PROSITE" id="PS00302">
    <property type="entry name" value="IF5A_HYPUSINE"/>
    <property type="match status" value="1"/>
</dbReference>
<reference key="1">
    <citation type="journal article" date="1993" name="Gene">
        <title>Cloning and sequencing of a chick embryo cDNA encoding the 20-kDa hypusine-containing protein, eIF-5A.</title>
        <authorList>
            <person name="Rinaudo M.S."/>
            <person name="Joe Y.A."/>
            <person name="Park M.H."/>
        </authorList>
    </citation>
    <scope>NUCLEOTIDE SEQUENCE [MRNA]</scope>
    <source>
        <tissue>Embryo</tissue>
    </source>
</reference>
<reference key="2">
    <citation type="journal article" date="1992" name="J. Biol. Chem.">
        <title>Two isoforms of eIF-5A in chick embryo. Isolation, activity, and comparison of sequences of the hypusine-containing proteins.</title>
        <authorList>
            <person name="Wolff E.C."/>
            <person name="Kinzy T.G."/>
            <person name="Merrick W.C."/>
            <person name="Park M.H."/>
        </authorList>
    </citation>
    <scope>PROTEIN SEQUENCE OF 7-121</scope>
    <scope>HYPUSINE AT LYS-50</scope>
    <scope>BLOCKED N-TERMINUS</scope>
    <source>
        <strain>Leghorn</strain>
        <tissue>Embryo</tissue>
    </source>
</reference>
<comment type="function">
    <text evidence="2 3 5">Translation factor that promotes translation elongation and termination, particularly upon ribosome stalling at specific amino acid sequence contexts (By similarity). Binds between the exit (E) and peptidyl (P) site of the ribosome and promotes rescue of stalled ribosome: specifically required for efficient translation of polyproline-containing peptides as well as other motifs that stall the ribosome. Acts as a ribosome quality control (RQC) cofactor by joining the RQC complex to facilitate peptidyl transfer during CAT tailing step (By similarity). Also involved in actin dynamics and cell cycle progression, mRNA decay and probably in a pathway involved in stress response and maintenance of cell wall integrity (By similarity).</text>
</comment>
<comment type="subunit">
    <text evidence="3 4">Binds to 80S ribosomes. Actively translating ribosomes show mutually exclusive binding of eIF5a (EIF5A or EIF5A2) and EEF2/eEF2 (By similarity). Interacts with DAPL1; interaction takes place at the polypeptide exit tunnel of hibernating ribosomes and prevents translation (By similarity).</text>
</comment>
<comment type="subcellular location">
    <subcellularLocation>
        <location evidence="3">Cytoplasm</location>
    </subcellularLocation>
    <subcellularLocation>
        <location evidence="3">Nucleus</location>
    </subcellularLocation>
    <subcellularLocation>
        <location evidence="3">Endoplasmic reticulum membrane</location>
        <topology evidence="3">Peripheral membrane protein</topology>
        <orientation evidence="3">Cytoplasmic side</orientation>
    </subcellularLocation>
    <text evidence="3">Hypusine modification promotes the nuclear export and cytoplasmic localization and there was a dynamic shift in the localization from predominantly cytoplasmic to primarily nuclear under apoptotic inducing conditions.</text>
</comment>
<comment type="PTM">
    <text evidence="6">Lys-50 undergoes hypusination, a unique post-translational modification that consists in the addition of a butylamino group from spermidine to lysine side chain and leads to the formation of a hypusine residue. eIF-5As are the only known proteins to undergo this modification, which is essential for their function.</text>
</comment>
<comment type="PTM">
    <text>The N-terminus is blocked.</text>
</comment>
<comment type="similarity">
    <text evidence="7">Belongs to the eIF-5A family.</text>
</comment>
<name>IF5A2_CHICK</name>
<sequence>MADELDFTTGDAGASSTYPMQCSALRKNGFVVLKGRPCKIVEMSTSKTGKHGHAKVHLVGIDIFNGKKYEDICPSTHNMDVPNIKRNDYQLIGIQDGYLSLLTESGEVREDLKLPEGDLGKEIEGKFNANEDVQISVISAMNEECAVAIKPCK</sequence>
<keyword id="KW-0007">Acetylation</keyword>
<keyword id="KW-0963">Cytoplasm</keyword>
<keyword id="KW-0903">Direct protein sequencing</keyword>
<keyword id="KW-0251">Elongation factor</keyword>
<keyword id="KW-0256">Endoplasmic reticulum</keyword>
<keyword id="KW-0385">Hypusine</keyword>
<keyword id="KW-0472">Membrane</keyword>
<keyword id="KW-0539">Nucleus</keyword>
<keyword id="KW-0648">Protein biosynthesis</keyword>
<keyword id="KW-1185">Reference proteome</keyword>
<keyword id="KW-0694">RNA-binding</keyword>
<evidence type="ECO:0000250" key="1"/>
<evidence type="ECO:0000250" key="2">
    <source>
        <dbReference type="UniProtKB" id="P23301"/>
    </source>
</evidence>
<evidence type="ECO:0000250" key="3">
    <source>
        <dbReference type="UniProtKB" id="P63241"/>
    </source>
</evidence>
<evidence type="ECO:0000250" key="4">
    <source>
        <dbReference type="UniProtKB" id="Q6NX89"/>
    </source>
</evidence>
<evidence type="ECO:0000250" key="5">
    <source>
        <dbReference type="UniProtKB" id="Q9GZV4"/>
    </source>
</evidence>
<evidence type="ECO:0000269" key="6">
    <source>
    </source>
</evidence>
<evidence type="ECO:0000305" key="7"/>
<protein>
    <recommendedName>
        <fullName>Eukaryotic translation initiation factor 5A-2</fullName>
        <shortName>eIF-5A-2</shortName>
        <shortName>eIF-5A2</shortName>
    </recommendedName>
    <alternativeName>
        <fullName>Eukaryotic initiation factor 5A isoform 2</fullName>
    </alternativeName>
    <alternativeName>
        <fullName>eIF-4D</fullName>
    </alternativeName>
</protein>
<accession>Q07460</accession>
<feature type="initiator methionine" description="Removed" evidence="1">
    <location>
        <position position="1"/>
    </location>
</feature>
<feature type="chain" id="PRO_0000142454" description="Eukaryotic translation initiation factor 5A-2">
    <location>
        <begin position="2"/>
        <end position="153"/>
    </location>
</feature>
<feature type="modified residue" description="N-acetylalanine" evidence="5">
    <location>
        <position position="2"/>
    </location>
</feature>
<feature type="modified residue" description="Hypusine" evidence="6">
    <location>
        <position position="50"/>
    </location>
</feature>
<proteinExistence type="evidence at protein level"/>